<geneLocation type="chloroplast"/>
<dbReference type="EMBL" id="AY724308">
    <property type="protein sequence ID" value="AAU21360.1"/>
    <property type="molecule type" value="Genomic_DNA"/>
</dbReference>
<dbReference type="GO" id="GO:0009507">
    <property type="term" value="C:chloroplast"/>
    <property type="evidence" value="ECO:0007669"/>
    <property type="project" value="UniProtKB-SubCell"/>
</dbReference>
<dbReference type="GO" id="GO:0003723">
    <property type="term" value="F:RNA binding"/>
    <property type="evidence" value="ECO:0007669"/>
    <property type="project" value="UniProtKB-KW"/>
</dbReference>
<dbReference type="GO" id="GO:0006397">
    <property type="term" value="P:mRNA processing"/>
    <property type="evidence" value="ECO:0007669"/>
    <property type="project" value="UniProtKB-KW"/>
</dbReference>
<dbReference type="GO" id="GO:0008380">
    <property type="term" value="P:RNA splicing"/>
    <property type="evidence" value="ECO:0007669"/>
    <property type="project" value="UniProtKB-UniRule"/>
</dbReference>
<dbReference type="GO" id="GO:0008033">
    <property type="term" value="P:tRNA processing"/>
    <property type="evidence" value="ECO:0007669"/>
    <property type="project" value="UniProtKB-KW"/>
</dbReference>
<dbReference type="HAMAP" id="MF_01390">
    <property type="entry name" value="MatK"/>
    <property type="match status" value="1"/>
</dbReference>
<dbReference type="InterPro" id="IPR024937">
    <property type="entry name" value="Domain_X"/>
</dbReference>
<dbReference type="InterPro" id="IPR002866">
    <property type="entry name" value="Maturase_MatK"/>
</dbReference>
<dbReference type="InterPro" id="IPR024942">
    <property type="entry name" value="Maturase_MatK_N"/>
</dbReference>
<dbReference type="PANTHER" id="PTHR34811">
    <property type="entry name" value="MATURASE K"/>
    <property type="match status" value="1"/>
</dbReference>
<dbReference type="PANTHER" id="PTHR34811:SF1">
    <property type="entry name" value="MATURASE K"/>
    <property type="match status" value="1"/>
</dbReference>
<dbReference type="Pfam" id="PF01348">
    <property type="entry name" value="Intron_maturas2"/>
    <property type="match status" value="1"/>
</dbReference>
<dbReference type="Pfam" id="PF01824">
    <property type="entry name" value="MatK_N"/>
    <property type="match status" value="1"/>
</dbReference>
<feature type="chain" id="PRO_0000143448" description="Maturase K">
    <location>
        <begin position="1"/>
        <end position="512"/>
    </location>
</feature>
<accession>Q646P3</accession>
<gene>
    <name evidence="1" type="primary">matK</name>
</gene>
<organism>
    <name type="scientific">Koelreuteria paniculata</name>
    <name type="common">Goldenrain tree</name>
    <name type="synonym">Koelreuteria apiculata</name>
    <dbReference type="NCBI Taxonomy" id="43168"/>
    <lineage>
        <taxon>Eukaryota</taxon>
        <taxon>Viridiplantae</taxon>
        <taxon>Streptophyta</taxon>
        <taxon>Embryophyta</taxon>
        <taxon>Tracheophyta</taxon>
        <taxon>Spermatophyta</taxon>
        <taxon>Magnoliopsida</taxon>
        <taxon>eudicotyledons</taxon>
        <taxon>Gunneridae</taxon>
        <taxon>Pentapetalae</taxon>
        <taxon>rosids</taxon>
        <taxon>malvids</taxon>
        <taxon>Sapindales</taxon>
        <taxon>Sapindaceae</taxon>
        <taxon>Koelreuteria</taxon>
    </lineage>
</organism>
<comment type="function">
    <text evidence="1">Usually encoded in the trnK tRNA gene intron. Probably assists in splicing its own and other chloroplast group II introns.</text>
</comment>
<comment type="subcellular location">
    <subcellularLocation>
        <location>Plastid</location>
        <location>Chloroplast</location>
    </subcellularLocation>
</comment>
<comment type="similarity">
    <text evidence="1">Belongs to the intron maturase 2 family. MatK subfamily.</text>
</comment>
<evidence type="ECO:0000255" key="1">
    <source>
        <dbReference type="HAMAP-Rule" id="MF_01390"/>
    </source>
</evidence>
<proteinExistence type="inferred from homology"/>
<sequence length="512" mass="60929">MEKFQIYLEXDGFQQQNFLYPLLFREYIYTLXHDHGLNRSAISLENGGYDNKSSSLSMKRLSTLLYQQIHLSIYANDSNPNQFIGHNNNLYSQMISEGFAVIVEIPFSLRLASFLEGQEMAKSHNFQSIHSIFPFFEDNFSHLNYVLDVLIPHPIRPEILVQTFRYWVKDASSLHLLRFFLHEYFNWNSLITPKKSISIFSTSNPRFFLFLYNSHVYEDEFIFFFLRNQSSHLRSTSSGVLFERIHFYGKVNYLVEVFANDFQNILWLFKDPFXHYVRYRGKAILASKDTPLLMNKWKYYLVNLWQWHFHVWSQPGRVHINHLHKYSINFLGYLSRGRLNTLVVRSQMLENAFLIENVMKKFETAVPIISLIESLTKARFCNPLXNPISKPTWADSSDSHIINRFVRICRNLSHYHSGSSKKKGLYRIKYILRVSCVKSLVRKHKSTVRVFLKRLGSEFFREFLTEEEHAISLIFSRASFTWRRLYRGRVWYLDIICINDLVNHDKLEIVFR</sequence>
<keyword id="KW-0150">Chloroplast</keyword>
<keyword id="KW-0507">mRNA processing</keyword>
<keyword id="KW-0934">Plastid</keyword>
<keyword id="KW-0694">RNA-binding</keyword>
<keyword id="KW-0819">tRNA processing</keyword>
<reference key="1">
    <citation type="journal article" date="2005" name="Syst. Bot.">
        <title>Phylogenetic inference in Sapindaceae using plastid matK and rbcL sequences.</title>
        <authorList>
            <person name="Harrington M.G."/>
            <person name="Edwards K.J."/>
            <person name="Johnson S.A."/>
            <person name="Chase M.W."/>
            <person name="Gadek P.A."/>
        </authorList>
        <dbReference type="AGRICOLA" id="IND43726779"/>
    </citation>
    <scope>NUCLEOTIDE SEQUENCE [GENOMIC DNA]</scope>
</reference>
<protein>
    <recommendedName>
        <fullName evidence="1">Maturase K</fullName>
    </recommendedName>
    <alternativeName>
        <fullName evidence="1">Intron maturase</fullName>
    </alternativeName>
</protein>
<name>MATK_KOEPA</name>